<reference key="1">
    <citation type="journal article" date="2004" name="Nat. Biotechnol.">
        <title>The genome sequence of the capnophilic rumen bacterium Mannheimia succiniciproducens.</title>
        <authorList>
            <person name="Hong S.H."/>
            <person name="Kim J.S."/>
            <person name="Lee S.Y."/>
            <person name="In Y.H."/>
            <person name="Choi S.S."/>
            <person name="Rih J.-K."/>
            <person name="Kim C.H."/>
            <person name="Jeong H."/>
            <person name="Hur C.G."/>
            <person name="Kim J.J."/>
        </authorList>
    </citation>
    <scope>NUCLEOTIDE SEQUENCE [LARGE SCALE GENOMIC DNA]</scope>
    <source>
        <strain>KCTC 0769BP / MBEL55E</strain>
    </source>
</reference>
<accession>Q65T36</accession>
<gene>
    <name evidence="1" type="primary">argR</name>
    <name type="ordered locus">MS1267</name>
</gene>
<comment type="function">
    <text evidence="1">Regulates arginine biosynthesis genes.</text>
</comment>
<comment type="pathway">
    <text>Amino-acid biosynthesis; L-arginine biosynthesis [regulation].</text>
</comment>
<comment type="subcellular location">
    <subcellularLocation>
        <location evidence="1">Cytoplasm</location>
    </subcellularLocation>
</comment>
<comment type="similarity">
    <text evidence="1">Belongs to the ArgR family.</text>
</comment>
<organism>
    <name type="scientific">Mannheimia succiniciproducens (strain KCTC 0769BP / MBEL55E)</name>
    <dbReference type="NCBI Taxonomy" id="221988"/>
    <lineage>
        <taxon>Bacteria</taxon>
        <taxon>Pseudomonadati</taxon>
        <taxon>Pseudomonadota</taxon>
        <taxon>Gammaproteobacteria</taxon>
        <taxon>Pasteurellales</taxon>
        <taxon>Pasteurellaceae</taxon>
        <taxon>Basfia</taxon>
    </lineage>
</organism>
<dbReference type="EMBL" id="AE016827">
    <property type="protein sequence ID" value="AAU37874.1"/>
    <property type="molecule type" value="Genomic_DNA"/>
</dbReference>
<dbReference type="RefSeq" id="WP_011200441.1">
    <property type="nucleotide sequence ID" value="NC_006300.1"/>
</dbReference>
<dbReference type="SMR" id="Q65T36"/>
<dbReference type="STRING" id="221988.MS1267"/>
<dbReference type="KEGG" id="msu:MS1267"/>
<dbReference type="eggNOG" id="COG1438">
    <property type="taxonomic scope" value="Bacteria"/>
</dbReference>
<dbReference type="HOGENOM" id="CLU_097103_2_0_6"/>
<dbReference type="OrthoDB" id="7060358at2"/>
<dbReference type="UniPathway" id="UPA00068"/>
<dbReference type="Proteomes" id="UP000000607">
    <property type="component" value="Chromosome"/>
</dbReference>
<dbReference type="GO" id="GO:0005737">
    <property type="term" value="C:cytoplasm"/>
    <property type="evidence" value="ECO:0007669"/>
    <property type="project" value="UniProtKB-SubCell"/>
</dbReference>
<dbReference type="GO" id="GO:0034618">
    <property type="term" value="F:arginine binding"/>
    <property type="evidence" value="ECO:0007669"/>
    <property type="project" value="InterPro"/>
</dbReference>
<dbReference type="GO" id="GO:0003677">
    <property type="term" value="F:DNA binding"/>
    <property type="evidence" value="ECO:0007669"/>
    <property type="project" value="UniProtKB-KW"/>
</dbReference>
<dbReference type="GO" id="GO:0003700">
    <property type="term" value="F:DNA-binding transcription factor activity"/>
    <property type="evidence" value="ECO:0007669"/>
    <property type="project" value="UniProtKB-UniRule"/>
</dbReference>
<dbReference type="GO" id="GO:0006526">
    <property type="term" value="P:L-arginine biosynthetic process"/>
    <property type="evidence" value="ECO:0007669"/>
    <property type="project" value="UniProtKB-UniPathway"/>
</dbReference>
<dbReference type="GO" id="GO:0051259">
    <property type="term" value="P:protein complex oligomerization"/>
    <property type="evidence" value="ECO:0007669"/>
    <property type="project" value="InterPro"/>
</dbReference>
<dbReference type="GO" id="GO:1900079">
    <property type="term" value="P:regulation of arginine biosynthetic process"/>
    <property type="evidence" value="ECO:0007669"/>
    <property type="project" value="UniProtKB-UniRule"/>
</dbReference>
<dbReference type="Gene3D" id="3.30.1360.40">
    <property type="match status" value="1"/>
</dbReference>
<dbReference type="Gene3D" id="1.10.10.10">
    <property type="entry name" value="Winged helix-like DNA-binding domain superfamily/Winged helix DNA-binding domain"/>
    <property type="match status" value="1"/>
</dbReference>
<dbReference type="HAMAP" id="MF_00173">
    <property type="entry name" value="Arg_repressor"/>
    <property type="match status" value="1"/>
</dbReference>
<dbReference type="InterPro" id="IPR001669">
    <property type="entry name" value="Arg_repress"/>
</dbReference>
<dbReference type="InterPro" id="IPR020899">
    <property type="entry name" value="Arg_repress_C"/>
</dbReference>
<dbReference type="InterPro" id="IPR036251">
    <property type="entry name" value="Arg_repress_C_sf"/>
</dbReference>
<dbReference type="InterPro" id="IPR020900">
    <property type="entry name" value="Arg_repress_DNA-bd"/>
</dbReference>
<dbReference type="InterPro" id="IPR036388">
    <property type="entry name" value="WH-like_DNA-bd_sf"/>
</dbReference>
<dbReference type="InterPro" id="IPR036390">
    <property type="entry name" value="WH_DNA-bd_sf"/>
</dbReference>
<dbReference type="NCBIfam" id="TIGR01529">
    <property type="entry name" value="argR_whole"/>
    <property type="match status" value="1"/>
</dbReference>
<dbReference type="NCBIfam" id="NF003457">
    <property type="entry name" value="PRK05066.1"/>
    <property type="match status" value="1"/>
</dbReference>
<dbReference type="PANTHER" id="PTHR34471">
    <property type="entry name" value="ARGININE REPRESSOR"/>
    <property type="match status" value="1"/>
</dbReference>
<dbReference type="PANTHER" id="PTHR34471:SF1">
    <property type="entry name" value="ARGININE REPRESSOR"/>
    <property type="match status" value="1"/>
</dbReference>
<dbReference type="Pfam" id="PF01316">
    <property type="entry name" value="Arg_repressor"/>
    <property type="match status" value="1"/>
</dbReference>
<dbReference type="Pfam" id="PF02863">
    <property type="entry name" value="Arg_repressor_C"/>
    <property type="match status" value="1"/>
</dbReference>
<dbReference type="PRINTS" id="PR01467">
    <property type="entry name" value="ARGREPRESSOR"/>
</dbReference>
<dbReference type="SUPFAM" id="SSF55252">
    <property type="entry name" value="C-terminal domain of arginine repressor"/>
    <property type="match status" value="1"/>
</dbReference>
<dbReference type="SUPFAM" id="SSF46785">
    <property type="entry name" value="Winged helix' DNA-binding domain"/>
    <property type="match status" value="1"/>
</dbReference>
<protein>
    <recommendedName>
        <fullName evidence="1">Arginine repressor</fullName>
    </recommendedName>
</protein>
<feature type="chain" id="PRO_0000205100" description="Arginine repressor">
    <location>
        <begin position="1"/>
        <end position="155"/>
    </location>
</feature>
<evidence type="ECO:0000255" key="1">
    <source>
        <dbReference type="HAMAP-Rule" id="MF_00173"/>
    </source>
</evidence>
<name>ARGR_MANSM</name>
<proteinExistence type="inferred from homology"/>
<keyword id="KW-0028">Amino-acid biosynthesis</keyword>
<keyword id="KW-0055">Arginine biosynthesis</keyword>
<keyword id="KW-0963">Cytoplasm</keyword>
<keyword id="KW-0238">DNA-binding</keyword>
<keyword id="KW-0678">Repressor</keyword>
<keyword id="KW-0804">Transcription</keyword>
<keyword id="KW-0805">Transcription regulation</keyword>
<sequence length="155" mass="17029">MAIEKTDNLLTVFKDLLSQERFGSQSEIVSALQDLGFSNINQSKVSRMLTKFGAIRTRNTRMEMVYCLPNELSVPNTSSPLKNLVLDIDHNDFLIVIKTSPGAAQLIARLLDSVGKTEGILGTIAGDDTIFITPTKGTGIKELINTIQQLFENSL</sequence>